<dbReference type="EC" id="2.7.8.7" evidence="1"/>
<dbReference type="EMBL" id="CP001396">
    <property type="protein sequence ID" value="ACR63426.1"/>
    <property type="molecule type" value="Genomic_DNA"/>
</dbReference>
<dbReference type="RefSeq" id="WP_000986023.1">
    <property type="nucleotide sequence ID" value="NC_012759.1"/>
</dbReference>
<dbReference type="SMR" id="C4ZYI6"/>
<dbReference type="KEGG" id="ebw:BWG_2327"/>
<dbReference type="HOGENOM" id="CLU_089696_3_1_6"/>
<dbReference type="GO" id="GO:0005737">
    <property type="term" value="C:cytoplasm"/>
    <property type="evidence" value="ECO:0007669"/>
    <property type="project" value="UniProtKB-SubCell"/>
</dbReference>
<dbReference type="GO" id="GO:0008897">
    <property type="term" value="F:holo-[acyl-carrier-protein] synthase activity"/>
    <property type="evidence" value="ECO:0007669"/>
    <property type="project" value="UniProtKB-UniRule"/>
</dbReference>
<dbReference type="GO" id="GO:0000287">
    <property type="term" value="F:magnesium ion binding"/>
    <property type="evidence" value="ECO:0007669"/>
    <property type="project" value="UniProtKB-UniRule"/>
</dbReference>
<dbReference type="GO" id="GO:0006633">
    <property type="term" value="P:fatty acid biosynthetic process"/>
    <property type="evidence" value="ECO:0007669"/>
    <property type="project" value="UniProtKB-UniRule"/>
</dbReference>
<dbReference type="FunFam" id="3.90.470.20:FF:000001">
    <property type="entry name" value="Holo-[acyl-carrier-protein] synthase"/>
    <property type="match status" value="1"/>
</dbReference>
<dbReference type="Gene3D" id="3.90.470.20">
    <property type="entry name" value="4'-phosphopantetheinyl transferase domain"/>
    <property type="match status" value="1"/>
</dbReference>
<dbReference type="HAMAP" id="MF_00101">
    <property type="entry name" value="AcpS"/>
    <property type="match status" value="1"/>
</dbReference>
<dbReference type="InterPro" id="IPR008278">
    <property type="entry name" value="4-PPantetheinyl_Trfase_dom"/>
</dbReference>
<dbReference type="InterPro" id="IPR037143">
    <property type="entry name" value="4-PPantetheinyl_Trfase_dom_sf"/>
</dbReference>
<dbReference type="InterPro" id="IPR002582">
    <property type="entry name" value="ACPS"/>
</dbReference>
<dbReference type="InterPro" id="IPR004568">
    <property type="entry name" value="Ppantetheine-prot_Trfase_dom"/>
</dbReference>
<dbReference type="NCBIfam" id="TIGR00516">
    <property type="entry name" value="acpS"/>
    <property type="match status" value="1"/>
</dbReference>
<dbReference type="NCBIfam" id="TIGR00556">
    <property type="entry name" value="pantethn_trn"/>
    <property type="match status" value="1"/>
</dbReference>
<dbReference type="Pfam" id="PF01648">
    <property type="entry name" value="ACPS"/>
    <property type="match status" value="1"/>
</dbReference>
<dbReference type="SUPFAM" id="SSF56214">
    <property type="entry name" value="4'-phosphopantetheinyl transferase"/>
    <property type="match status" value="1"/>
</dbReference>
<protein>
    <recommendedName>
        <fullName evidence="1">Holo-[acyl-carrier-protein] synthase</fullName>
        <shortName evidence="1">Holo-ACP synthase</shortName>
        <ecNumber evidence="1">2.7.8.7</ecNumber>
    </recommendedName>
    <alternativeName>
        <fullName evidence="1">4'-phosphopantetheinyl transferase AcpS</fullName>
    </alternativeName>
</protein>
<name>ACPS_ECOBW</name>
<comment type="function">
    <text evidence="1">Transfers the 4'-phosphopantetheine moiety from coenzyme A to a Ser of acyl-carrier-protein.</text>
</comment>
<comment type="catalytic activity">
    <reaction evidence="1">
        <text>apo-[ACP] + CoA = holo-[ACP] + adenosine 3',5'-bisphosphate + H(+)</text>
        <dbReference type="Rhea" id="RHEA:12068"/>
        <dbReference type="Rhea" id="RHEA-COMP:9685"/>
        <dbReference type="Rhea" id="RHEA-COMP:9690"/>
        <dbReference type="ChEBI" id="CHEBI:15378"/>
        <dbReference type="ChEBI" id="CHEBI:29999"/>
        <dbReference type="ChEBI" id="CHEBI:57287"/>
        <dbReference type="ChEBI" id="CHEBI:58343"/>
        <dbReference type="ChEBI" id="CHEBI:64479"/>
        <dbReference type="EC" id="2.7.8.7"/>
    </reaction>
</comment>
<comment type="cofactor">
    <cofactor evidence="1">
        <name>Mg(2+)</name>
        <dbReference type="ChEBI" id="CHEBI:18420"/>
    </cofactor>
</comment>
<comment type="subcellular location">
    <subcellularLocation>
        <location evidence="1">Cytoplasm</location>
    </subcellularLocation>
</comment>
<comment type="similarity">
    <text evidence="1">Belongs to the P-Pant transferase superfamily. AcpS family.</text>
</comment>
<proteinExistence type="inferred from homology"/>
<organism>
    <name type="scientific">Escherichia coli (strain K12 / MC4100 / BW2952)</name>
    <dbReference type="NCBI Taxonomy" id="595496"/>
    <lineage>
        <taxon>Bacteria</taxon>
        <taxon>Pseudomonadati</taxon>
        <taxon>Pseudomonadota</taxon>
        <taxon>Gammaproteobacteria</taxon>
        <taxon>Enterobacterales</taxon>
        <taxon>Enterobacteriaceae</taxon>
        <taxon>Escherichia</taxon>
    </lineage>
</organism>
<keyword id="KW-0963">Cytoplasm</keyword>
<keyword id="KW-0275">Fatty acid biosynthesis</keyword>
<keyword id="KW-0276">Fatty acid metabolism</keyword>
<keyword id="KW-0444">Lipid biosynthesis</keyword>
<keyword id="KW-0443">Lipid metabolism</keyword>
<keyword id="KW-0460">Magnesium</keyword>
<keyword id="KW-0479">Metal-binding</keyword>
<keyword id="KW-0808">Transferase</keyword>
<evidence type="ECO:0000255" key="1">
    <source>
        <dbReference type="HAMAP-Rule" id="MF_00101"/>
    </source>
</evidence>
<gene>
    <name evidence="1" type="primary">acpS</name>
    <name type="ordered locus">BWG_2327</name>
</gene>
<reference key="1">
    <citation type="journal article" date="2009" name="J. Bacteriol.">
        <title>Genomic sequencing reveals regulatory mutations and recombinational events in the widely used MC4100 lineage of Escherichia coli K-12.</title>
        <authorList>
            <person name="Ferenci T."/>
            <person name="Zhou Z."/>
            <person name="Betteridge T."/>
            <person name="Ren Y."/>
            <person name="Liu Y."/>
            <person name="Feng L."/>
            <person name="Reeves P.R."/>
            <person name="Wang L."/>
        </authorList>
    </citation>
    <scope>NUCLEOTIDE SEQUENCE [LARGE SCALE GENOMIC DNA]</scope>
    <source>
        <strain>K12 / MC4100 / BW2952</strain>
    </source>
</reference>
<feature type="chain" id="PRO_1000202793" description="Holo-[acyl-carrier-protein] synthase">
    <location>
        <begin position="1"/>
        <end position="126"/>
    </location>
</feature>
<feature type="binding site" evidence="1">
    <location>
        <position position="9"/>
    </location>
    <ligand>
        <name>Mg(2+)</name>
        <dbReference type="ChEBI" id="CHEBI:18420"/>
    </ligand>
</feature>
<feature type="binding site" evidence="1">
    <location>
        <position position="58"/>
    </location>
    <ligand>
        <name>Mg(2+)</name>
        <dbReference type="ChEBI" id="CHEBI:18420"/>
    </ligand>
</feature>
<sequence length="126" mass="14052">MAILGLGTDIVEIARIEAVIARSGDRLARRVLSDNEWAIWKTHHQPVRFLAKRFAVKEAAAKAFGTGIRNGLAFNQFEVFNDELGKPRLRLWGEALKLAEKLGVANMHVTLADERHYACATVIIES</sequence>
<accession>C4ZYI6</accession>